<name>EZRA_STRP2</name>
<evidence type="ECO:0000255" key="1">
    <source>
        <dbReference type="HAMAP-Rule" id="MF_00728"/>
    </source>
</evidence>
<feature type="chain" id="PRO_1000045906" description="Septation ring formation regulator EzrA">
    <location>
        <begin position="1"/>
        <end position="575"/>
    </location>
</feature>
<feature type="topological domain" description="Extracellular" evidence="1">
    <location>
        <begin position="1"/>
        <end position="8"/>
    </location>
</feature>
<feature type="transmembrane region" description="Helical" evidence="1">
    <location>
        <begin position="9"/>
        <end position="27"/>
    </location>
</feature>
<feature type="topological domain" description="Cytoplasmic" evidence="1">
    <location>
        <begin position="28"/>
        <end position="575"/>
    </location>
</feature>
<feature type="coiled-coil region" evidence="1">
    <location>
        <begin position="105"/>
        <end position="191"/>
    </location>
</feature>
<feature type="coiled-coil region" evidence="1">
    <location>
        <begin position="265"/>
        <end position="301"/>
    </location>
</feature>
<feature type="coiled-coil region" evidence="1">
    <location>
        <begin position="354"/>
        <end position="416"/>
    </location>
</feature>
<feature type="coiled-coil region" evidence="1">
    <location>
        <begin position="456"/>
        <end position="526"/>
    </location>
</feature>
<sequence>MSNGQLIYLMVAIAVILVLAYVVAIFLRKRNEGRLEALEERKEELYNLPVNDEVEAVKNMHLIGQSQVAFREWNQKWVDLSLNSFADIENNLFEAEGYNHSFRFLKASHQIDQIESQITLIEEDIAAIRNALADLEKQESKNSGRVLHALDLFEELQHRVAENSEQYGQALDEIEKQLENIQSEFSQFVTLNSSGDPVEAAVILDNTENHILALSHIVDRVPALVTTLSTELPDQLQDLEAGYRKLIDANYHFVETDIEARFHLLYEAFKKNQENIRQLELDNAEYENGQAQEEINALYDIFTREIAAQKVVENLLATLPTYLQHMKENNTLLGEDIARLNKTYLLPETAASHVRRIQTELESFEAAIVEVTSNQEEPTQAYSVLEENLEDLQTQLKDIEDEQISVSERLTQIEKDDINARQKANVYVNRLHTIKRYMEKRNLPGIPQTFLKLFFTASNNTEDLMVELEQKMINIESVTRVLEIATNDMEALETETYNIVQYATLTEQLLQYSNRYRSFDERIQEAFNEALDIFEKEFDYHASFDKISQALEVAEPGVTNRFVTSYEKTRETIRF</sequence>
<protein>
    <recommendedName>
        <fullName evidence="1">Septation ring formation regulator EzrA</fullName>
    </recommendedName>
</protein>
<dbReference type="EMBL" id="CP000410">
    <property type="protein sequence ID" value="ABJ55189.1"/>
    <property type="molecule type" value="Genomic_DNA"/>
</dbReference>
<dbReference type="RefSeq" id="WP_000064821.1">
    <property type="nucleotide sequence ID" value="NZ_JAMLJR010000001.1"/>
</dbReference>
<dbReference type="SMR" id="Q04L94"/>
<dbReference type="PaxDb" id="373153-SPD_0710"/>
<dbReference type="KEGG" id="spd:SPD_0710"/>
<dbReference type="eggNOG" id="COG4477">
    <property type="taxonomic scope" value="Bacteria"/>
</dbReference>
<dbReference type="HOGENOM" id="CLU_034079_2_0_9"/>
<dbReference type="BioCyc" id="SPNE373153:G1G6V-780-MONOMER"/>
<dbReference type="Proteomes" id="UP000001452">
    <property type="component" value="Chromosome"/>
</dbReference>
<dbReference type="GO" id="GO:0005886">
    <property type="term" value="C:plasma membrane"/>
    <property type="evidence" value="ECO:0007669"/>
    <property type="project" value="UniProtKB-SubCell"/>
</dbReference>
<dbReference type="GO" id="GO:0005940">
    <property type="term" value="C:septin ring"/>
    <property type="evidence" value="ECO:0007669"/>
    <property type="project" value="InterPro"/>
</dbReference>
<dbReference type="GO" id="GO:0000917">
    <property type="term" value="P:division septum assembly"/>
    <property type="evidence" value="ECO:0007669"/>
    <property type="project" value="UniProtKB-KW"/>
</dbReference>
<dbReference type="GO" id="GO:0000921">
    <property type="term" value="P:septin ring assembly"/>
    <property type="evidence" value="ECO:0007669"/>
    <property type="project" value="InterPro"/>
</dbReference>
<dbReference type="HAMAP" id="MF_00728">
    <property type="entry name" value="EzrA"/>
    <property type="match status" value="1"/>
</dbReference>
<dbReference type="InterPro" id="IPR010379">
    <property type="entry name" value="EzrA"/>
</dbReference>
<dbReference type="NCBIfam" id="NF003410">
    <property type="entry name" value="PRK04778.1-4"/>
    <property type="match status" value="1"/>
</dbReference>
<dbReference type="Pfam" id="PF06160">
    <property type="entry name" value="EzrA"/>
    <property type="match status" value="1"/>
</dbReference>
<accession>Q04L94</accession>
<gene>
    <name evidence="1" type="primary">ezrA</name>
    <name type="ordered locus">SPD_0710</name>
</gene>
<keyword id="KW-0131">Cell cycle</keyword>
<keyword id="KW-0132">Cell division</keyword>
<keyword id="KW-1003">Cell membrane</keyword>
<keyword id="KW-0175">Coiled coil</keyword>
<keyword id="KW-0472">Membrane</keyword>
<keyword id="KW-1185">Reference proteome</keyword>
<keyword id="KW-0717">Septation</keyword>
<keyword id="KW-0812">Transmembrane</keyword>
<keyword id="KW-1133">Transmembrane helix</keyword>
<organism>
    <name type="scientific">Streptococcus pneumoniae serotype 2 (strain D39 / NCTC 7466)</name>
    <dbReference type="NCBI Taxonomy" id="373153"/>
    <lineage>
        <taxon>Bacteria</taxon>
        <taxon>Bacillati</taxon>
        <taxon>Bacillota</taxon>
        <taxon>Bacilli</taxon>
        <taxon>Lactobacillales</taxon>
        <taxon>Streptococcaceae</taxon>
        <taxon>Streptococcus</taxon>
    </lineage>
</organism>
<proteinExistence type="inferred from homology"/>
<comment type="function">
    <text evidence="1">Negative regulator of FtsZ ring formation; modulates the frequency and position of FtsZ ring formation. Inhibits FtsZ ring formation at polar sites. Interacts either with FtsZ or with one of its binding partners to promote depolymerization.</text>
</comment>
<comment type="subcellular location">
    <subcellularLocation>
        <location evidence="1">Cell membrane</location>
        <topology evidence="1">Single-pass membrane protein</topology>
    </subcellularLocation>
    <text evidence="1">Colocalized with FtsZ to the nascent septal site.</text>
</comment>
<comment type="similarity">
    <text evidence="1">Belongs to the EzrA family.</text>
</comment>
<reference key="1">
    <citation type="journal article" date="2007" name="J. Bacteriol.">
        <title>Genome sequence of Avery's virulent serotype 2 strain D39 of Streptococcus pneumoniae and comparison with that of unencapsulated laboratory strain R6.</title>
        <authorList>
            <person name="Lanie J.A."/>
            <person name="Ng W.-L."/>
            <person name="Kazmierczak K.M."/>
            <person name="Andrzejewski T.M."/>
            <person name="Davidsen T.M."/>
            <person name="Wayne K.J."/>
            <person name="Tettelin H."/>
            <person name="Glass J.I."/>
            <person name="Winkler M.E."/>
        </authorList>
    </citation>
    <scope>NUCLEOTIDE SEQUENCE [LARGE SCALE GENOMIC DNA]</scope>
    <source>
        <strain>D39 / NCTC 7466</strain>
    </source>
</reference>